<feature type="chain" id="PRO_1000016442" description="Histidine--tRNA ligase">
    <location>
        <begin position="1"/>
        <end position="424"/>
    </location>
</feature>
<name>SYH_SHEAM</name>
<accession>A1S862</accession>
<organism>
    <name type="scientific">Shewanella amazonensis (strain ATCC BAA-1098 / SB2B)</name>
    <dbReference type="NCBI Taxonomy" id="326297"/>
    <lineage>
        <taxon>Bacteria</taxon>
        <taxon>Pseudomonadati</taxon>
        <taxon>Pseudomonadota</taxon>
        <taxon>Gammaproteobacteria</taxon>
        <taxon>Alteromonadales</taxon>
        <taxon>Shewanellaceae</taxon>
        <taxon>Shewanella</taxon>
    </lineage>
</organism>
<gene>
    <name evidence="1" type="primary">hisS</name>
    <name type="ordered locus">Sama_2364</name>
</gene>
<evidence type="ECO:0000255" key="1">
    <source>
        <dbReference type="HAMAP-Rule" id="MF_00127"/>
    </source>
</evidence>
<reference key="1">
    <citation type="submission" date="2006-12" db="EMBL/GenBank/DDBJ databases">
        <title>Complete sequence of Shewanella amazonensis SB2B.</title>
        <authorList>
            <consortium name="US DOE Joint Genome Institute"/>
            <person name="Copeland A."/>
            <person name="Lucas S."/>
            <person name="Lapidus A."/>
            <person name="Barry K."/>
            <person name="Detter J.C."/>
            <person name="Glavina del Rio T."/>
            <person name="Hammon N."/>
            <person name="Israni S."/>
            <person name="Dalin E."/>
            <person name="Tice H."/>
            <person name="Pitluck S."/>
            <person name="Munk A.C."/>
            <person name="Brettin T."/>
            <person name="Bruce D."/>
            <person name="Han C."/>
            <person name="Tapia R."/>
            <person name="Gilna P."/>
            <person name="Schmutz J."/>
            <person name="Larimer F."/>
            <person name="Land M."/>
            <person name="Hauser L."/>
            <person name="Kyrpides N."/>
            <person name="Mikhailova N."/>
            <person name="Fredrickson J."/>
            <person name="Richardson P."/>
        </authorList>
    </citation>
    <scope>NUCLEOTIDE SEQUENCE [LARGE SCALE GENOMIC DNA]</scope>
    <source>
        <strain>ATCC BAA-1098 / SB2B</strain>
    </source>
</reference>
<dbReference type="EC" id="6.1.1.21" evidence="1"/>
<dbReference type="EMBL" id="CP000507">
    <property type="protein sequence ID" value="ABM00569.1"/>
    <property type="molecule type" value="Genomic_DNA"/>
</dbReference>
<dbReference type="RefSeq" id="WP_011760476.1">
    <property type="nucleotide sequence ID" value="NC_008700.1"/>
</dbReference>
<dbReference type="SMR" id="A1S862"/>
<dbReference type="STRING" id="326297.Sama_2364"/>
<dbReference type="KEGG" id="saz:Sama_2364"/>
<dbReference type="eggNOG" id="COG0124">
    <property type="taxonomic scope" value="Bacteria"/>
</dbReference>
<dbReference type="HOGENOM" id="CLU_025113_1_1_6"/>
<dbReference type="OrthoDB" id="9800814at2"/>
<dbReference type="Proteomes" id="UP000009175">
    <property type="component" value="Chromosome"/>
</dbReference>
<dbReference type="GO" id="GO:0005737">
    <property type="term" value="C:cytoplasm"/>
    <property type="evidence" value="ECO:0007669"/>
    <property type="project" value="UniProtKB-SubCell"/>
</dbReference>
<dbReference type="GO" id="GO:0005524">
    <property type="term" value="F:ATP binding"/>
    <property type="evidence" value="ECO:0007669"/>
    <property type="project" value="UniProtKB-UniRule"/>
</dbReference>
<dbReference type="GO" id="GO:0004821">
    <property type="term" value="F:histidine-tRNA ligase activity"/>
    <property type="evidence" value="ECO:0007669"/>
    <property type="project" value="UniProtKB-UniRule"/>
</dbReference>
<dbReference type="GO" id="GO:0006427">
    <property type="term" value="P:histidyl-tRNA aminoacylation"/>
    <property type="evidence" value="ECO:0007669"/>
    <property type="project" value="UniProtKB-UniRule"/>
</dbReference>
<dbReference type="CDD" id="cd00773">
    <property type="entry name" value="HisRS-like_core"/>
    <property type="match status" value="1"/>
</dbReference>
<dbReference type="CDD" id="cd00859">
    <property type="entry name" value="HisRS_anticodon"/>
    <property type="match status" value="1"/>
</dbReference>
<dbReference type="FunFam" id="3.30.930.10:FF:000005">
    <property type="entry name" value="Histidine--tRNA ligase"/>
    <property type="match status" value="1"/>
</dbReference>
<dbReference type="Gene3D" id="3.40.50.800">
    <property type="entry name" value="Anticodon-binding domain"/>
    <property type="match status" value="1"/>
</dbReference>
<dbReference type="Gene3D" id="3.30.930.10">
    <property type="entry name" value="Bira Bifunctional Protein, Domain 2"/>
    <property type="match status" value="1"/>
</dbReference>
<dbReference type="HAMAP" id="MF_00127">
    <property type="entry name" value="His_tRNA_synth"/>
    <property type="match status" value="1"/>
</dbReference>
<dbReference type="InterPro" id="IPR006195">
    <property type="entry name" value="aa-tRNA-synth_II"/>
</dbReference>
<dbReference type="InterPro" id="IPR045864">
    <property type="entry name" value="aa-tRNA-synth_II/BPL/LPL"/>
</dbReference>
<dbReference type="InterPro" id="IPR004154">
    <property type="entry name" value="Anticodon-bd"/>
</dbReference>
<dbReference type="InterPro" id="IPR036621">
    <property type="entry name" value="Anticodon-bd_dom_sf"/>
</dbReference>
<dbReference type="InterPro" id="IPR015807">
    <property type="entry name" value="His-tRNA-ligase"/>
</dbReference>
<dbReference type="InterPro" id="IPR041715">
    <property type="entry name" value="HisRS-like_core"/>
</dbReference>
<dbReference type="InterPro" id="IPR004516">
    <property type="entry name" value="HisRS/HisZ"/>
</dbReference>
<dbReference type="InterPro" id="IPR033656">
    <property type="entry name" value="HisRS_anticodon"/>
</dbReference>
<dbReference type="NCBIfam" id="TIGR00442">
    <property type="entry name" value="hisS"/>
    <property type="match status" value="1"/>
</dbReference>
<dbReference type="PANTHER" id="PTHR43707:SF1">
    <property type="entry name" value="HISTIDINE--TRNA LIGASE, MITOCHONDRIAL-RELATED"/>
    <property type="match status" value="1"/>
</dbReference>
<dbReference type="PANTHER" id="PTHR43707">
    <property type="entry name" value="HISTIDYL-TRNA SYNTHETASE"/>
    <property type="match status" value="1"/>
</dbReference>
<dbReference type="Pfam" id="PF03129">
    <property type="entry name" value="HGTP_anticodon"/>
    <property type="match status" value="1"/>
</dbReference>
<dbReference type="Pfam" id="PF13393">
    <property type="entry name" value="tRNA-synt_His"/>
    <property type="match status" value="1"/>
</dbReference>
<dbReference type="PIRSF" id="PIRSF001549">
    <property type="entry name" value="His-tRNA_synth"/>
    <property type="match status" value="1"/>
</dbReference>
<dbReference type="SUPFAM" id="SSF52954">
    <property type="entry name" value="Class II aaRS ABD-related"/>
    <property type="match status" value="1"/>
</dbReference>
<dbReference type="SUPFAM" id="SSF55681">
    <property type="entry name" value="Class II aaRS and biotin synthetases"/>
    <property type="match status" value="1"/>
</dbReference>
<dbReference type="PROSITE" id="PS50862">
    <property type="entry name" value="AA_TRNA_LIGASE_II"/>
    <property type="match status" value="1"/>
</dbReference>
<sequence length="424" mass="47036">MAKQIQAIRGMNDILPNQSPVWQKLEAVLRDAVAAFGYSEIRTPIVESTDLFKRSIGEVTDIVEKEMYTFEDRNGDSLTLRPEGTASTVRAGNEHGLLYNQEQRLWYTGPMFRHERPQKGRYRQFHQFGVEVYGIASADIDAEVLMLSNMLWQKLGLTEHVVLEINTLGDSDERAAYRDALIAFLEVHKDKLDEDSQRRMYSNPLRVLDTKNPEIQAILADAPALMDYLGEESKSHFSTLRELLDAVGIQYRVNPRLVRGLDYYNRTVFEWVTDSLGAQGTVLAGGRYDGLVGQLGGKDTPAVGFAMGLERIVLLLETLELAKDVPAAVDVYVTAMGDSCVPAAFAIANELRVALPGVRIMTHCGGGNFKKQIKRADKSGAALALIIGDNELAEGKVAIKPLRNDNEQQLVAREALAETIKALI</sequence>
<comment type="catalytic activity">
    <reaction evidence="1">
        <text>tRNA(His) + L-histidine + ATP = L-histidyl-tRNA(His) + AMP + diphosphate + H(+)</text>
        <dbReference type="Rhea" id="RHEA:17313"/>
        <dbReference type="Rhea" id="RHEA-COMP:9665"/>
        <dbReference type="Rhea" id="RHEA-COMP:9689"/>
        <dbReference type="ChEBI" id="CHEBI:15378"/>
        <dbReference type="ChEBI" id="CHEBI:30616"/>
        <dbReference type="ChEBI" id="CHEBI:33019"/>
        <dbReference type="ChEBI" id="CHEBI:57595"/>
        <dbReference type="ChEBI" id="CHEBI:78442"/>
        <dbReference type="ChEBI" id="CHEBI:78527"/>
        <dbReference type="ChEBI" id="CHEBI:456215"/>
        <dbReference type="EC" id="6.1.1.21"/>
    </reaction>
</comment>
<comment type="subunit">
    <text evidence="1">Homodimer.</text>
</comment>
<comment type="subcellular location">
    <subcellularLocation>
        <location evidence="1">Cytoplasm</location>
    </subcellularLocation>
</comment>
<comment type="similarity">
    <text evidence="1">Belongs to the class-II aminoacyl-tRNA synthetase family.</text>
</comment>
<keyword id="KW-0030">Aminoacyl-tRNA synthetase</keyword>
<keyword id="KW-0067">ATP-binding</keyword>
<keyword id="KW-0963">Cytoplasm</keyword>
<keyword id="KW-0436">Ligase</keyword>
<keyword id="KW-0547">Nucleotide-binding</keyword>
<keyword id="KW-0648">Protein biosynthesis</keyword>
<keyword id="KW-1185">Reference proteome</keyword>
<proteinExistence type="inferred from homology"/>
<protein>
    <recommendedName>
        <fullName evidence="1">Histidine--tRNA ligase</fullName>
        <ecNumber evidence="1">6.1.1.21</ecNumber>
    </recommendedName>
    <alternativeName>
        <fullName evidence="1">Histidyl-tRNA synthetase</fullName>
        <shortName evidence="1">HisRS</shortName>
    </alternativeName>
</protein>